<proteinExistence type="predicted"/>
<keyword id="KW-1185">Reference proteome</keyword>
<sequence length="64" mass="6682">MTLLSSISKIGTIKNGNSLNEITSTISNNEAKGSPSFSGNQSTKSIGDLLLQIAIITKATTKNK</sequence>
<gene>
    <name type="ORF">DDB_G0286781</name>
</gene>
<protein>
    <recommendedName>
        <fullName>Protein sigN173</fullName>
    </recommendedName>
    <alternativeName>
        <fullName>SrfA-induced gene N-like protein 173</fullName>
    </alternativeName>
</protein>
<dbReference type="EMBL" id="AAFI02000089">
    <property type="protein sequence ID" value="EAL64146.1"/>
    <property type="molecule type" value="Genomic_DNA"/>
</dbReference>
<dbReference type="RefSeq" id="XP_637623.1">
    <property type="nucleotide sequence ID" value="XM_632531.1"/>
</dbReference>
<dbReference type="FunCoup" id="Q54LD8">
    <property type="interactions" value="62"/>
</dbReference>
<dbReference type="PaxDb" id="44689-DDB0266578"/>
<dbReference type="EnsemblProtists" id="EAL64146">
    <property type="protein sequence ID" value="EAL64146"/>
    <property type="gene ID" value="DDB_G0286781"/>
</dbReference>
<dbReference type="GeneID" id="8625764"/>
<dbReference type="KEGG" id="ddi:DDB_G0286781"/>
<dbReference type="dictyBase" id="DDB_G0286781"/>
<dbReference type="VEuPathDB" id="AmoebaDB:DDB_G0286781"/>
<dbReference type="HOGENOM" id="CLU_2799320_0_0_1"/>
<dbReference type="InParanoid" id="Q54LD8"/>
<dbReference type="PhylomeDB" id="Q54LD8"/>
<dbReference type="PRO" id="PR:Q54LD8"/>
<dbReference type="Proteomes" id="UP000002195">
    <property type="component" value="Chromosome 4"/>
</dbReference>
<accession>Q54LD8</accession>
<organism>
    <name type="scientific">Dictyostelium discoideum</name>
    <name type="common">Social amoeba</name>
    <dbReference type="NCBI Taxonomy" id="44689"/>
    <lineage>
        <taxon>Eukaryota</taxon>
        <taxon>Amoebozoa</taxon>
        <taxon>Evosea</taxon>
        <taxon>Eumycetozoa</taxon>
        <taxon>Dictyostelia</taxon>
        <taxon>Dictyosteliales</taxon>
        <taxon>Dictyosteliaceae</taxon>
        <taxon>Dictyostelium</taxon>
    </lineage>
</organism>
<reference key="1">
    <citation type="journal article" date="2005" name="Nature">
        <title>The genome of the social amoeba Dictyostelium discoideum.</title>
        <authorList>
            <person name="Eichinger L."/>
            <person name="Pachebat J.A."/>
            <person name="Gloeckner G."/>
            <person name="Rajandream M.A."/>
            <person name="Sucgang R."/>
            <person name="Berriman M."/>
            <person name="Song J."/>
            <person name="Olsen R."/>
            <person name="Szafranski K."/>
            <person name="Xu Q."/>
            <person name="Tunggal B."/>
            <person name="Kummerfeld S."/>
            <person name="Madera M."/>
            <person name="Konfortov B.A."/>
            <person name="Rivero F."/>
            <person name="Bankier A.T."/>
            <person name="Lehmann R."/>
            <person name="Hamlin N."/>
            <person name="Davies R."/>
            <person name="Gaudet P."/>
            <person name="Fey P."/>
            <person name="Pilcher K."/>
            <person name="Chen G."/>
            <person name="Saunders D."/>
            <person name="Sodergren E.J."/>
            <person name="Davis P."/>
            <person name="Kerhornou A."/>
            <person name="Nie X."/>
            <person name="Hall N."/>
            <person name="Anjard C."/>
            <person name="Hemphill L."/>
            <person name="Bason N."/>
            <person name="Farbrother P."/>
            <person name="Desany B."/>
            <person name="Just E."/>
            <person name="Morio T."/>
            <person name="Rost R."/>
            <person name="Churcher C.M."/>
            <person name="Cooper J."/>
            <person name="Haydock S."/>
            <person name="van Driessche N."/>
            <person name="Cronin A."/>
            <person name="Goodhead I."/>
            <person name="Muzny D.M."/>
            <person name="Mourier T."/>
            <person name="Pain A."/>
            <person name="Lu M."/>
            <person name="Harper D."/>
            <person name="Lindsay R."/>
            <person name="Hauser H."/>
            <person name="James K.D."/>
            <person name="Quiles M."/>
            <person name="Madan Babu M."/>
            <person name="Saito T."/>
            <person name="Buchrieser C."/>
            <person name="Wardroper A."/>
            <person name="Felder M."/>
            <person name="Thangavelu M."/>
            <person name="Johnson D."/>
            <person name="Knights A."/>
            <person name="Loulseged H."/>
            <person name="Mungall K.L."/>
            <person name="Oliver K."/>
            <person name="Price C."/>
            <person name="Quail M.A."/>
            <person name="Urushihara H."/>
            <person name="Hernandez J."/>
            <person name="Rabbinowitsch E."/>
            <person name="Steffen D."/>
            <person name="Sanders M."/>
            <person name="Ma J."/>
            <person name="Kohara Y."/>
            <person name="Sharp S."/>
            <person name="Simmonds M.N."/>
            <person name="Spiegler S."/>
            <person name="Tivey A."/>
            <person name="Sugano S."/>
            <person name="White B."/>
            <person name="Walker D."/>
            <person name="Woodward J.R."/>
            <person name="Winckler T."/>
            <person name="Tanaka Y."/>
            <person name="Shaulsky G."/>
            <person name="Schleicher M."/>
            <person name="Weinstock G.M."/>
            <person name="Rosenthal A."/>
            <person name="Cox E.C."/>
            <person name="Chisholm R.L."/>
            <person name="Gibbs R.A."/>
            <person name="Loomis W.F."/>
            <person name="Platzer M."/>
            <person name="Kay R.R."/>
            <person name="Williams J.G."/>
            <person name="Dear P.H."/>
            <person name="Noegel A.A."/>
            <person name="Barrell B.G."/>
            <person name="Kuspa A."/>
        </authorList>
    </citation>
    <scope>NUCLEOTIDE SEQUENCE [LARGE SCALE GENOMIC DNA]</scope>
    <source>
        <strain>AX4</strain>
    </source>
</reference>
<reference key="2">
    <citation type="journal article" date="2008" name="BMC Microbiol.">
        <title>Structural and functional studies of a family of Dictyostelium discoideum developmentally regulated, prestalk genes coding for small proteins.</title>
        <authorList>
            <person name="Vicente J.J."/>
            <person name="Galardi-Castilla M."/>
            <person name="Escalante R."/>
            <person name="Sastre L."/>
        </authorList>
    </citation>
    <scope>IDENTIFICATION</scope>
</reference>
<feature type="chain" id="PRO_0000394032" description="Protein sigN173">
    <location>
        <begin position="1"/>
        <end position="64"/>
    </location>
</feature>
<name>SI173_DICDI</name>